<reference key="1">
    <citation type="journal article" date="2002" name="Circ. Res.">
        <title>Regulation of smooth muscle cell differentiation by AT-rich interaction domain transcription factors Mrf2alpha and Mrf2beta.</title>
        <authorList>
            <person name="Watanabe M."/>
            <person name="Layne M.D."/>
            <person name="Hsieh C.-M."/>
            <person name="Maemura K."/>
            <person name="Gray S."/>
            <person name="Lee M.-E."/>
            <person name="Jain M.K."/>
        </authorList>
    </citation>
    <scope>NUCLEOTIDE SEQUENCE [MRNA] (ISOFORMS 1 AND 2)</scope>
    <scope>FUNCTION</scope>
    <scope>SUBCELLULAR LOCATION</scope>
    <scope>TISSUE SPECIFICITY</scope>
    <scope>INDUCTION</scope>
    <source>
        <strain>Swiss Webster / NIH</strain>
    </source>
</reference>
<reference key="2">
    <citation type="journal article" date="2005" name="Science">
        <title>The transcriptional landscape of the mammalian genome.</title>
        <authorList>
            <person name="Carninci P."/>
            <person name="Kasukawa T."/>
            <person name="Katayama S."/>
            <person name="Gough J."/>
            <person name="Frith M.C."/>
            <person name="Maeda N."/>
            <person name="Oyama R."/>
            <person name="Ravasi T."/>
            <person name="Lenhard B."/>
            <person name="Wells C."/>
            <person name="Kodzius R."/>
            <person name="Shimokawa K."/>
            <person name="Bajic V.B."/>
            <person name="Brenner S.E."/>
            <person name="Batalov S."/>
            <person name="Forrest A.R."/>
            <person name="Zavolan M."/>
            <person name="Davis M.J."/>
            <person name="Wilming L.G."/>
            <person name="Aidinis V."/>
            <person name="Allen J.E."/>
            <person name="Ambesi-Impiombato A."/>
            <person name="Apweiler R."/>
            <person name="Aturaliya R.N."/>
            <person name="Bailey T.L."/>
            <person name="Bansal M."/>
            <person name="Baxter L."/>
            <person name="Beisel K.W."/>
            <person name="Bersano T."/>
            <person name="Bono H."/>
            <person name="Chalk A.M."/>
            <person name="Chiu K.P."/>
            <person name="Choudhary V."/>
            <person name="Christoffels A."/>
            <person name="Clutterbuck D.R."/>
            <person name="Crowe M.L."/>
            <person name="Dalla E."/>
            <person name="Dalrymple B.P."/>
            <person name="de Bono B."/>
            <person name="Della Gatta G."/>
            <person name="di Bernardo D."/>
            <person name="Down T."/>
            <person name="Engstrom P."/>
            <person name="Fagiolini M."/>
            <person name="Faulkner G."/>
            <person name="Fletcher C.F."/>
            <person name="Fukushima T."/>
            <person name="Furuno M."/>
            <person name="Futaki S."/>
            <person name="Gariboldi M."/>
            <person name="Georgii-Hemming P."/>
            <person name="Gingeras T.R."/>
            <person name="Gojobori T."/>
            <person name="Green R.E."/>
            <person name="Gustincich S."/>
            <person name="Harbers M."/>
            <person name="Hayashi Y."/>
            <person name="Hensch T.K."/>
            <person name="Hirokawa N."/>
            <person name="Hill D."/>
            <person name="Huminiecki L."/>
            <person name="Iacono M."/>
            <person name="Ikeo K."/>
            <person name="Iwama A."/>
            <person name="Ishikawa T."/>
            <person name="Jakt M."/>
            <person name="Kanapin A."/>
            <person name="Katoh M."/>
            <person name="Kawasawa Y."/>
            <person name="Kelso J."/>
            <person name="Kitamura H."/>
            <person name="Kitano H."/>
            <person name="Kollias G."/>
            <person name="Krishnan S.P."/>
            <person name="Kruger A."/>
            <person name="Kummerfeld S.K."/>
            <person name="Kurochkin I.V."/>
            <person name="Lareau L.F."/>
            <person name="Lazarevic D."/>
            <person name="Lipovich L."/>
            <person name="Liu J."/>
            <person name="Liuni S."/>
            <person name="McWilliam S."/>
            <person name="Madan Babu M."/>
            <person name="Madera M."/>
            <person name="Marchionni L."/>
            <person name="Matsuda H."/>
            <person name="Matsuzawa S."/>
            <person name="Miki H."/>
            <person name="Mignone F."/>
            <person name="Miyake S."/>
            <person name="Morris K."/>
            <person name="Mottagui-Tabar S."/>
            <person name="Mulder N."/>
            <person name="Nakano N."/>
            <person name="Nakauchi H."/>
            <person name="Ng P."/>
            <person name="Nilsson R."/>
            <person name="Nishiguchi S."/>
            <person name="Nishikawa S."/>
            <person name="Nori F."/>
            <person name="Ohara O."/>
            <person name="Okazaki Y."/>
            <person name="Orlando V."/>
            <person name="Pang K.C."/>
            <person name="Pavan W.J."/>
            <person name="Pavesi G."/>
            <person name="Pesole G."/>
            <person name="Petrovsky N."/>
            <person name="Piazza S."/>
            <person name="Reed J."/>
            <person name="Reid J.F."/>
            <person name="Ring B.Z."/>
            <person name="Ringwald M."/>
            <person name="Rost B."/>
            <person name="Ruan Y."/>
            <person name="Salzberg S.L."/>
            <person name="Sandelin A."/>
            <person name="Schneider C."/>
            <person name="Schoenbach C."/>
            <person name="Sekiguchi K."/>
            <person name="Semple C.A."/>
            <person name="Seno S."/>
            <person name="Sessa L."/>
            <person name="Sheng Y."/>
            <person name="Shibata Y."/>
            <person name="Shimada H."/>
            <person name="Shimada K."/>
            <person name="Silva D."/>
            <person name="Sinclair B."/>
            <person name="Sperling S."/>
            <person name="Stupka E."/>
            <person name="Sugiura K."/>
            <person name="Sultana R."/>
            <person name="Takenaka Y."/>
            <person name="Taki K."/>
            <person name="Tammoja K."/>
            <person name="Tan S.L."/>
            <person name="Tang S."/>
            <person name="Taylor M.S."/>
            <person name="Tegner J."/>
            <person name="Teichmann S.A."/>
            <person name="Ueda H.R."/>
            <person name="van Nimwegen E."/>
            <person name="Verardo R."/>
            <person name="Wei C.L."/>
            <person name="Yagi K."/>
            <person name="Yamanishi H."/>
            <person name="Zabarovsky E."/>
            <person name="Zhu S."/>
            <person name="Zimmer A."/>
            <person name="Hide W."/>
            <person name="Bult C."/>
            <person name="Grimmond S.M."/>
            <person name="Teasdale R.D."/>
            <person name="Liu E.T."/>
            <person name="Brusic V."/>
            <person name="Quackenbush J."/>
            <person name="Wahlestedt C."/>
            <person name="Mattick J.S."/>
            <person name="Hume D.A."/>
            <person name="Kai C."/>
            <person name="Sasaki D."/>
            <person name="Tomaru Y."/>
            <person name="Fukuda S."/>
            <person name="Kanamori-Katayama M."/>
            <person name="Suzuki M."/>
            <person name="Aoki J."/>
            <person name="Arakawa T."/>
            <person name="Iida J."/>
            <person name="Imamura K."/>
            <person name="Itoh M."/>
            <person name="Kato T."/>
            <person name="Kawaji H."/>
            <person name="Kawagashira N."/>
            <person name="Kawashima T."/>
            <person name="Kojima M."/>
            <person name="Kondo S."/>
            <person name="Konno H."/>
            <person name="Nakano K."/>
            <person name="Ninomiya N."/>
            <person name="Nishio T."/>
            <person name="Okada M."/>
            <person name="Plessy C."/>
            <person name="Shibata K."/>
            <person name="Shiraki T."/>
            <person name="Suzuki S."/>
            <person name="Tagami M."/>
            <person name="Waki K."/>
            <person name="Watahiki A."/>
            <person name="Okamura-Oho Y."/>
            <person name="Suzuki H."/>
            <person name="Kawai J."/>
            <person name="Hayashizaki Y."/>
        </authorList>
    </citation>
    <scope>NUCLEOTIDE SEQUENCE [LARGE SCALE MRNA] (ISOFORM 3)</scope>
    <scope>NUCLEOTIDE SEQUENCE [LARGE SCALE MRNA] OF 1-253 AND 528-1188</scope>
    <source>
        <strain>C57BL/6J</strain>
        <tissue>Embryo</tissue>
        <tissue>Testis</tissue>
    </source>
</reference>
<reference key="3">
    <citation type="journal article" date="2009" name="PLoS Biol.">
        <title>Lineage-specific biology revealed by a finished genome assembly of the mouse.</title>
        <authorList>
            <person name="Church D.M."/>
            <person name="Goodstadt L."/>
            <person name="Hillier L.W."/>
            <person name="Zody M.C."/>
            <person name="Goldstein S."/>
            <person name="She X."/>
            <person name="Bult C.J."/>
            <person name="Agarwala R."/>
            <person name="Cherry J.L."/>
            <person name="DiCuccio M."/>
            <person name="Hlavina W."/>
            <person name="Kapustin Y."/>
            <person name="Meric P."/>
            <person name="Maglott D."/>
            <person name="Birtle Z."/>
            <person name="Marques A.C."/>
            <person name="Graves T."/>
            <person name="Zhou S."/>
            <person name="Teague B."/>
            <person name="Potamousis K."/>
            <person name="Churas C."/>
            <person name="Place M."/>
            <person name="Herschleb J."/>
            <person name="Runnheim R."/>
            <person name="Forrest D."/>
            <person name="Amos-Landgraf J."/>
            <person name="Schwartz D.C."/>
            <person name="Cheng Z."/>
            <person name="Lindblad-Toh K."/>
            <person name="Eichler E.E."/>
            <person name="Ponting C.P."/>
        </authorList>
    </citation>
    <scope>NUCLEOTIDE SEQUENCE [LARGE SCALE GENOMIC DNA]</scope>
    <source>
        <strain>C57BL/6J</strain>
    </source>
</reference>
<reference key="4">
    <citation type="journal article" date="2001" name="Genome Res.">
        <title>Gene targeting of Desrt, a novel ARID class DNA-binding protein, causes growth retardation and abnormal development of reproductive organs.</title>
        <authorList>
            <person name="Lahoud M.H."/>
            <person name="Ristevski S."/>
            <person name="Venter D.J."/>
            <person name="Jermiin L.S."/>
            <person name="Bertoncello I."/>
            <person name="Zavarsek S."/>
            <person name="Hasthorpe S."/>
            <person name="Drago J."/>
            <person name="de Kretser D."/>
            <person name="Hertzog P.J."/>
            <person name="Kola I."/>
        </authorList>
    </citation>
    <scope>NUCLEOTIDE SEQUENCE [MRNA] OF 1-819 (ISOFORM 1)</scope>
    <scope>DNA-BINDING</scope>
    <scope>TISSUE SPECIFICITY</scope>
    <source>
        <strain>C57BL/6 X CBA</strain>
        <tissue>Lung</tissue>
        <tissue>Placenta</tissue>
    </source>
</reference>
<reference key="5">
    <citation type="submission" date="2009-01" db="UniProtKB">
        <authorList>
            <person name="Lubec G."/>
            <person name="Sunyer B."/>
            <person name="Chen W.-Q."/>
        </authorList>
    </citation>
    <scope>PROTEIN SEQUENCE OF 374-397</scope>
    <scope>IDENTIFICATION BY MASS SPECTROMETRY</scope>
    <source>
        <strain>OF1</strain>
        <tissue>Hippocampus</tissue>
    </source>
</reference>
<reference key="6">
    <citation type="journal article" date="2001" name="Mech. Dev.">
        <title>Desrt, an AT-rich interaction domain family transcription factor gene, is an early marker for nephrogenic mesoderm and is expressed dynamically during mouse limb development.</title>
        <authorList>
            <person name="Ristevski S."/>
            <person name="Tam P.P.L."/>
            <person name="Kola I."/>
            <person name="Hertzog P."/>
        </authorList>
    </citation>
    <scope>DEVELOPMENTAL STAGE</scope>
</reference>
<reference key="7">
    <citation type="journal article" date="2003" name="Biochem. Biophys. Res. Commun.">
        <title>Neonatal mortality and leanness in mice lacking the ARID transcription factor Mrf-2.</title>
        <authorList>
            <person name="Whitson R.H."/>
            <person name="Tsark W."/>
            <person name="Huang T.H."/>
            <person name="Itakura K."/>
        </authorList>
    </citation>
    <scope>FUNCTION</scope>
    <scope>DISRUPTION PHENOTYPE</scope>
</reference>
<reference key="8">
    <citation type="journal article" date="2008" name="Biochem. Biophys. Res. Commun.">
        <title>Role of modulator recognition factor 2 in adipogenesis and leptin expression in 3T3-L1 cells.</title>
        <authorList>
            <person name="Dong J."/>
            <person name="Ishimori N."/>
            <person name="Paigen B."/>
            <person name="Tsutsui H."/>
            <person name="Fujii S."/>
        </authorList>
    </citation>
    <scope>FUNCTION</scope>
    <scope>INDUCTION</scope>
</reference>
<reference key="9">
    <citation type="journal article" date="2008" name="Mol. Endocrinol.">
        <title>Modulator recognition factor-2 is required for adipogenesis in mouse embryo fibroblasts and 3T3-L1 cells.</title>
        <authorList>
            <person name="Yamakawa T."/>
            <person name="Whitson R.H."/>
            <person name="Li S.L."/>
            <person name="Itakura K."/>
        </authorList>
    </citation>
    <scope>FUNCTION</scope>
</reference>
<reference key="10">
    <citation type="journal article" date="2010" name="Biochem. Biophys. Res. Commun.">
        <title>Modulator recognition factor-2 regulates triglyceride metabolism in adipocytes.</title>
        <authorList>
            <person name="Yamakawa T."/>
            <person name="Sugimoto K."/>
            <person name="Whitson R.H."/>
            <person name="Itakura K."/>
        </authorList>
    </citation>
    <scope>FUNCTION</scope>
</reference>
<organism>
    <name type="scientific">Mus musculus</name>
    <name type="common">Mouse</name>
    <dbReference type="NCBI Taxonomy" id="10090"/>
    <lineage>
        <taxon>Eukaryota</taxon>
        <taxon>Metazoa</taxon>
        <taxon>Chordata</taxon>
        <taxon>Craniata</taxon>
        <taxon>Vertebrata</taxon>
        <taxon>Euteleostomi</taxon>
        <taxon>Mammalia</taxon>
        <taxon>Eutheria</taxon>
        <taxon>Euarchontoglires</taxon>
        <taxon>Glires</taxon>
        <taxon>Rodentia</taxon>
        <taxon>Myomorpha</taxon>
        <taxon>Muroidea</taxon>
        <taxon>Muridae</taxon>
        <taxon>Murinae</taxon>
        <taxon>Mus</taxon>
        <taxon>Mus</taxon>
    </lineage>
</organism>
<protein>
    <recommendedName>
        <fullName>AT-rich interactive domain-containing protein 5B</fullName>
        <shortName>ARID domain-containing protein 5B</shortName>
    </recommendedName>
    <alternativeName>
        <fullName>Developmentally and sexually retarded with transient immune abnormalities protein</fullName>
        <shortName>Desrt</shortName>
    </alternativeName>
    <alternativeName>
        <fullName>MRF1-like</fullName>
    </alternativeName>
    <alternativeName>
        <fullName>Modulator recognition factor protein 2</fullName>
        <shortName>MRF-2</shortName>
    </alternativeName>
</protein>
<name>ARI5B_MOUSE</name>
<sequence>MEPNSLQWVGSPCGLHGPYIFYKAFQFHLEGKPRILSLGDFFFVRCTPKDPICIAELQLLWEERTSRQLLSSSKLYFLPEDTPQGRNSDHGEDEVIAVSEKVIVKLEDLVKWAHSDFSKWRCGLRATPVKTEAFGRNGQKEALLRYRQSTLNSGLNFKDVLKEKADLGEDEEETNVIVLSYPQYCRYRSMLKRIQDKPSSILTDQFALALGGIAVVSRNPQILYCRDTFDHPTLIENESVCDEFAPNLKGRPRKKKTCPQRRDSFSGSKDPNNNCDGKVISKVKGEARSALTKPKNNHNNCKKTSNEEKPKLSIGEECRADEQAFLVALYKYMKERKTPIERIPYLGFKQINLWTMFQAAQKLGGYETITARRQWKHIYDELGGNPGSTSAATCTRRHYERLILPYERFIKGEEDKPLPPIKPRKQENNTQENENKTKVSGNKRIKQEMAKNKKEKENTPKPQDTSEVSSEQRKEEETLNHKSAPEPLPAPEVKGKPEGHKDLGARAPVSRADPEKANETDQGSNSEKEAEEMGDKGLAPLLPSPPLPPEKDSAPTPGAGKQPLASPSTQMDSKQEAKPCCFTESPEKDLQGAPFSSFSATKPPLTSQNEAEEEQLPATANYIANCTVKVDQLGSDDIHTALKQTPKVLVVQSFDMFKDKDLTGPMNENHGLNYTPLLYSRGNPGIMSPLAKKKLLSQVSGASLSSSYPYGSPPPLISKKKLIAREDLCSGLSQGHHSQSSDHTAVSRPSVIQHVQSFKNKASEDRKSINDIFKHDKLSRSDAHRCGFSKHQLGSLADSYILKQETQEGKDKLLEKRAVSHAHVPSFLADFYSSPHLHSLYRHTEHHLHNEQSSKYAARDAYQESENGAFLSHKHPEKIHVNYLASLHLQDKKVAAAEASTDDQPTDLSLPKNPHKLTSKVLGLAHSTSGSQEIKGASQFQVVSNQSRDCHPKACRVSPMTMSGPKKYPESLARSGKPHQVRLENFRKMEGMVHPILHRKMSPQNIGAARPIKRSLEDLDLVIAGKKARAVSPLDPAKEASGKEKASEQESEGNKGAYGGHSGAASEGHKLPLSTPIFPGLYSGSLCNSGLNSRLPAGYSHSLQYLKNQTVLSPLMQPLAFHSLVMQRGIFTSPTNSQQLYRHLAAATPVGSSYGDLLHNSIYPLAGINPQAAFPSSQLSSVHPSTKL</sequence>
<dbReference type="EMBL" id="AF280065">
    <property type="protein sequence ID" value="AAM93269.1"/>
    <property type="molecule type" value="mRNA"/>
</dbReference>
<dbReference type="EMBL" id="AF401550">
    <property type="protein sequence ID" value="AAM93282.1"/>
    <property type="molecule type" value="mRNA"/>
</dbReference>
<dbReference type="EMBL" id="AK017396">
    <property type="protein sequence ID" value="BAB30727.1"/>
    <property type="molecule type" value="mRNA"/>
</dbReference>
<dbReference type="EMBL" id="AK031596">
    <property type="protein sequence ID" value="BAC27467.1"/>
    <property type="molecule type" value="mRNA"/>
</dbReference>
<dbReference type="EMBL" id="AK034633">
    <property type="protein sequence ID" value="BAC28778.1"/>
    <property type="status" value="ALT_INIT"/>
    <property type="molecule type" value="mRNA"/>
</dbReference>
<dbReference type="EMBL" id="AC122293">
    <property type="status" value="NOT_ANNOTATED_CDS"/>
    <property type="molecule type" value="Genomic_DNA"/>
</dbReference>
<dbReference type="EMBL" id="AC132588">
    <property type="status" value="NOT_ANNOTATED_CDS"/>
    <property type="molecule type" value="Genomic_DNA"/>
</dbReference>
<dbReference type="EMBL" id="AF169968">
    <property type="protein sequence ID" value="AAF89682.1"/>
    <property type="status" value="ALT_SEQ"/>
    <property type="molecule type" value="mRNA"/>
</dbReference>
<dbReference type="CCDS" id="CCDS35929.1">
    <molecule id="Q8BM75-1"/>
</dbReference>
<dbReference type="RefSeq" id="NP_076087.2">
    <molecule id="Q8BM75-1"/>
    <property type="nucleotide sequence ID" value="NM_023598.2"/>
</dbReference>
<dbReference type="BMRB" id="Q8BM75"/>
<dbReference type="SMR" id="Q8BM75"/>
<dbReference type="BioGRID" id="214670">
    <property type="interactions" value="4"/>
</dbReference>
<dbReference type="FunCoup" id="Q8BM75">
    <property type="interactions" value="1657"/>
</dbReference>
<dbReference type="IntAct" id="Q8BM75">
    <property type="interactions" value="2"/>
</dbReference>
<dbReference type="MINT" id="Q8BM75"/>
<dbReference type="STRING" id="10090.ENSMUSP00000151227"/>
<dbReference type="GlyGen" id="Q8BM75">
    <property type="glycosylation" value="4 sites, 2 N-linked glycans (2 sites), 1 O-linked glycan (1 site)"/>
</dbReference>
<dbReference type="iPTMnet" id="Q8BM75"/>
<dbReference type="PhosphoSitePlus" id="Q8BM75"/>
<dbReference type="jPOST" id="Q8BM75"/>
<dbReference type="PaxDb" id="10090-ENSMUSP00000020106"/>
<dbReference type="PeptideAtlas" id="Q8BM75"/>
<dbReference type="ProteomicsDB" id="265096">
    <molecule id="Q8BM75-1"/>
</dbReference>
<dbReference type="ProteomicsDB" id="265097">
    <molecule id="Q8BM75-2"/>
</dbReference>
<dbReference type="ProteomicsDB" id="265098">
    <molecule id="Q8BM75-3"/>
</dbReference>
<dbReference type="Pumba" id="Q8BM75"/>
<dbReference type="Antibodypedia" id="2974">
    <property type="antibodies" value="121 antibodies from 22 providers"/>
</dbReference>
<dbReference type="DNASU" id="71371"/>
<dbReference type="Ensembl" id="ENSMUST00000218532.2">
    <molecule id="Q8BM75-2"/>
    <property type="protein sequence ID" value="ENSMUSP00000151665.2"/>
    <property type="gene ID" value="ENSMUSG00000019947.11"/>
</dbReference>
<dbReference type="Ensembl" id="ENSMUST00000219238.2">
    <molecule id="Q8BM75-1"/>
    <property type="protein sequence ID" value="ENSMUSP00000151227.2"/>
    <property type="gene ID" value="ENSMUSG00000019947.11"/>
</dbReference>
<dbReference type="GeneID" id="71371"/>
<dbReference type="KEGG" id="mmu:71371"/>
<dbReference type="UCSC" id="uc007fmf.1">
    <molecule id="Q8BM75-2"/>
    <property type="organism name" value="mouse"/>
</dbReference>
<dbReference type="UCSC" id="uc007fmg.1">
    <molecule id="Q8BM75-1"/>
    <property type="organism name" value="mouse"/>
</dbReference>
<dbReference type="UCSC" id="uc007fmj.1">
    <molecule id="Q8BM75-3"/>
    <property type="organism name" value="mouse"/>
</dbReference>
<dbReference type="AGR" id="MGI:2175912"/>
<dbReference type="CTD" id="84159"/>
<dbReference type="MGI" id="MGI:2175912">
    <property type="gene designation" value="Arid5b"/>
</dbReference>
<dbReference type="VEuPathDB" id="HostDB:ENSMUSG00000019947"/>
<dbReference type="eggNOG" id="KOG2744">
    <property type="taxonomic scope" value="Eukaryota"/>
</dbReference>
<dbReference type="GeneTree" id="ENSGT00940000161078"/>
<dbReference type="HOGENOM" id="CLU_007985_0_0_1"/>
<dbReference type="InParanoid" id="Q8BM75"/>
<dbReference type="OMA" id="KAEGYQD"/>
<dbReference type="OrthoDB" id="1938591at2759"/>
<dbReference type="TreeFam" id="TF324725"/>
<dbReference type="Reactome" id="R-MMU-3214842">
    <property type="pathway name" value="HDMs demethylate histones"/>
</dbReference>
<dbReference type="BioGRID-ORCS" id="71371">
    <property type="hits" value="4 hits in 81 CRISPR screens"/>
</dbReference>
<dbReference type="ChiTaRS" id="Arid5b">
    <property type="organism name" value="mouse"/>
</dbReference>
<dbReference type="PRO" id="PR:Q8BM75"/>
<dbReference type="Proteomes" id="UP000000589">
    <property type="component" value="Chromosome 10"/>
</dbReference>
<dbReference type="RNAct" id="Q8BM75">
    <property type="molecule type" value="protein"/>
</dbReference>
<dbReference type="Bgee" id="ENSMUSG00000019947">
    <property type="expression patterns" value="Expressed in animal zygote and 263 other cell types or tissues"/>
</dbReference>
<dbReference type="ExpressionAtlas" id="Q8BM75">
    <property type="expression patterns" value="baseline and differential"/>
</dbReference>
<dbReference type="GO" id="GO:0005634">
    <property type="term" value="C:nucleus"/>
    <property type="evidence" value="ECO:0007669"/>
    <property type="project" value="UniProtKB-SubCell"/>
</dbReference>
<dbReference type="GO" id="GO:0000976">
    <property type="term" value="F:transcription cis-regulatory region binding"/>
    <property type="evidence" value="ECO:0000250"/>
    <property type="project" value="UniProtKB"/>
</dbReference>
<dbReference type="GO" id="GO:0003713">
    <property type="term" value="F:transcription coactivator activity"/>
    <property type="evidence" value="ECO:0000250"/>
    <property type="project" value="UniProtKB"/>
</dbReference>
<dbReference type="GO" id="GO:0060612">
    <property type="term" value="P:adipose tissue development"/>
    <property type="evidence" value="ECO:0000315"/>
    <property type="project" value="UniProtKB"/>
</dbReference>
<dbReference type="GO" id="GO:0030325">
    <property type="term" value="P:adrenal gland development"/>
    <property type="evidence" value="ECO:0000315"/>
    <property type="project" value="MGI"/>
</dbReference>
<dbReference type="GO" id="GO:0048468">
    <property type="term" value="P:cell development"/>
    <property type="evidence" value="ECO:0000315"/>
    <property type="project" value="MGI"/>
</dbReference>
<dbReference type="GO" id="GO:1990830">
    <property type="term" value="P:cellular response to leukemia inhibitory factor"/>
    <property type="evidence" value="ECO:0000270"/>
    <property type="project" value="MGI"/>
</dbReference>
<dbReference type="GO" id="GO:0060325">
    <property type="term" value="P:face morphogenesis"/>
    <property type="evidence" value="ECO:0000315"/>
    <property type="project" value="MGI"/>
</dbReference>
<dbReference type="GO" id="GO:0045444">
    <property type="term" value="P:fat cell differentiation"/>
    <property type="evidence" value="ECO:0000315"/>
    <property type="project" value="MGI"/>
</dbReference>
<dbReference type="GO" id="GO:0060613">
    <property type="term" value="P:fat pad development"/>
    <property type="evidence" value="ECO:0000315"/>
    <property type="project" value="MGI"/>
</dbReference>
<dbReference type="GO" id="GO:0008585">
    <property type="term" value="P:female gonad development"/>
    <property type="evidence" value="ECO:0000315"/>
    <property type="project" value="MGI"/>
</dbReference>
<dbReference type="GO" id="GO:0010761">
    <property type="term" value="P:fibroblast migration"/>
    <property type="evidence" value="ECO:0000315"/>
    <property type="project" value="MGI"/>
</dbReference>
<dbReference type="GO" id="GO:0001822">
    <property type="term" value="P:kidney development"/>
    <property type="evidence" value="ECO:0000315"/>
    <property type="project" value="MGI"/>
</dbReference>
<dbReference type="GO" id="GO:0008584">
    <property type="term" value="P:male gonad development"/>
    <property type="evidence" value="ECO:0000315"/>
    <property type="project" value="MGI"/>
</dbReference>
<dbReference type="GO" id="GO:0035264">
    <property type="term" value="P:multicellular organism growth"/>
    <property type="evidence" value="ECO:0000315"/>
    <property type="project" value="MGI"/>
</dbReference>
<dbReference type="GO" id="GO:0048644">
    <property type="term" value="P:muscle organ morphogenesis"/>
    <property type="evidence" value="ECO:0000315"/>
    <property type="project" value="MGI"/>
</dbReference>
<dbReference type="GO" id="GO:0000122">
    <property type="term" value="P:negative regulation of transcription by RNA polymerase II"/>
    <property type="evidence" value="ECO:0007669"/>
    <property type="project" value="Ensembl"/>
</dbReference>
<dbReference type="GO" id="GO:0048008">
    <property type="term" value="P:platelet-derived growth factor receptor signaling pathway"/>
    <property type="evidence" value="ECO:0000315"/>
    <property type="project" value="MGI"/>
</dbReference>
<dbReference type="GO" id="GO:0009791">
    <property type="term" value="P:post-embryonic development"/>
    <property type="evidence" value="ECO:0000315"/>
    <property type="project" value="MGI"/>
</dbReference>
<dbReference type="GO" id="GO:0060021">
    <property type="term" value="P:roof of mouth development"/>
    <property type="evidence" value="ECO:0000315"/>
    <property type="project" value="MGI"/>
</dbReference>
<dbReference type="GO" id="GO:0048705">
    <property type="term" value="P:skeletal system morphogenesis"/>
    <property type="evidence" value="ECO:0000315"/>
    <property type="project" value="MGI"/>
</dbReference>
<dbReference type="CDD" id="cd16885">
    <property type="entry name" value="ARID_ARID5B"/>
    <property type="match status" value="1"/>
</dbReference>
<dbReference type="FunFam" id="1.10.150.60:FF:000004">
    <property type="entry name" value="AT-rich interactive domain-containing protein 5B"/>
    <property type="match status" value="1"/>
</dbReference>
<dbReference type="Gene3D" id="1.10.150.60">
    <property type="entry name" value="ARID DNA-binding domain"/>
    <property type="match status" value="1"/>
</dbReference>
<dbReference type="InterPro" id="IPR051232">
    <property type="entry name" value="ARID/SWI1_ChromRemod"/>
</dbReference>
<dbReference type="InterPro" id="IPR030408">
    <property type="entry name" value="ARID5B_ARID/BRIGHT_DNA-bd"/>
</dbReference>
<dbReference type="InterPro" id="IPR001606">
    <property type="entry name" value="ARID_dom"/>
</dbReference>
<dbReference type="InterPro" id="IPR036431">
    <property type="entry name" value="ARID_dom_sf"/>
</dbReference>
<dbReference type="PANTHER" id="PTHR13964:SF37">
    <property type="entry name" value="AT-RICH INTERACTIVE DOMAIN-CONTAINING PROTEIN 5B"/>
    <property type="match status" value="1"/>
</dbReference>
<dbReference type="PANTHER" id="PTHR13964">
    <property type="entry name" value="RBP-RELATED"/>
    <property type="match status" value="1"/>
</dbReference>
<dbReference type="Pfam" id="PF01388">
    <property type="entry name" value="ARID"/>
    <property type="match status" value="1"/>
</dbReference>
<dbReference type="SMART" id="SM01014">
    <property type="entry name" value="ARID"/>
    <property type="match status" value="1"/>
</dbReference>
<dbReference type="SMART" id="SM00501">
    <property type="entry name" value="BRIGHT"/>
    <property type="match status" value="1"/>
</dbReference>
<dbReference type="SUPFAM" id="SSF46774">
    <property type="entry name" value="ARID-like"/>
    <property type="match status" value="1"/>
</dbReference>
<dbReference type="PROSITE" id="PS51011">
    <property type="entry name" value="ARID"/>
    <property type="match status" value="1"/>
</dbReference>
<comment type="function">
    <text evidence="1 7 8 9 10 11">Transcription coactivator that binds to the 5'-AATA[CT]-3' core sequence and plays a key role in adipogenesis and liver development. Acts by forming a complex with phosphorylated PHF2, which mediates demethylation at Lys-337, leading to target the PHF2-ARID5B complex to target promoters, where PHF2 mediates demethylation of dimethylated 'Lys-9' of histone H3 (H3K9me2), followed by transcription activation of target genes. The PHF2-ARID5B complex acts as a coactivator of HNF4A in liver (By similarity). Required for adipogenesis: regulates triglyceride metabolism in adipocytes by regulating expression of adipogenic genes. Overexpression leads to induction of smooth muscle marker genes, suggesting that it may also act as a regulator of smooth muscle cell differentiation and proliferation.</text>
</comment>
<comment type="subcellular location">
    <subcellularLocation>
        <location evidence="3 7">Nucleus</location>
    </subcellularLocation>
</comment>
<comment type="alternative products">
    <event type="alternative splicing"/>
    <isoform>
        <id>Q8BM75-1</id>
        <name>1</name>
        <name>Mrf2alpha</name>
        <name>Alpha</name>
        <sequence type="displayed"/>
    </isoform>
    <isoform>
        <id>Q8BM75-2</id>
        <name>2</name>
        <name>Mrf2beta</name>
        <name>Beta</name>
        <sequence type="described" ref="VSP_009357 VSP_009358"/>
    </isoform>
    <isoform>
        <id>Q8BM75-3</id>
        <name>3</name>
        <sequence type="described" ref="VSP_009359 VSP_009360"/>
    </isoform>
</comment>
<comment type="tissue specificity">
    <text evidence="6 7">Widely expressed. Expressed in lung, heart, small intestine, kidney, muscle and brain. Also expressed in spleen, thymus, endocrine organs and in uterus and testis.</text>
</comment>
<comment type="developmental stage">
    <text evidence="5">First detected in the intermediate plate mesoderm, and subsequently in the nephrogenic cords of the urogenital ridges. Expressed in the developing limb. Also expressed in the myotome of the somites from 9.5 dpc, the oro-nasopharyngeal ectoderm and underlying mesenchyme, otic vesicles, the gut and its derivatives, and transiently in the liver at 11.5 dpc.</text>
</comment>
<comment type="induction">
    <text evidence="7 10">During smooth muscle cell differentiation in vitro. Upon adipogenesis.</text>
</comment>
<comment type="domain">
    <text>The ARID domain mediates the interaction with DNA.</text>
</comment>
<comment type="PTM">
    <text evidence="1">Methylation at Lys-337 prevents DNA-binding. Demethylation by PHF2 promotes recruitment of the PHF2-ARID5B complex to promoters (By similarity).</text>
</comment>
<comment type="disruption phenotype">
    <text evidence="8">High rate of neonatal mortality. Embryonic growth or birth weight are not effected, while lipid accumulation is severely reduced in brown adipose neonates at 24 hours of age. Mice weigh significantly less than controls from postnatal day 5 onward. Adult mice are lean, with significant reductions in brown and white adipose tissues, and in the percentage of body fat. Mice are also resistant to weight gains and obesity when maintained on high-fat diets.</text>
</comment>
<comment type="similarity">
    <text evidence="14">Belongs to the ARID5B family.</text>
</comment>
<comment type="sequence caution" evidence="14">
    <conflict type="erroneous termination">
        <sequence resource="EMBL-CDS" id="AAF89682"/>
    </conflict>
    <text>Truncated C-terminus.</text>
</comment>
<comment type="sequence caution" evidence="14">
    <conflict type="frameshift">
        <sequence resource="EMBL-CDS" id="AAF89682"/>
    </conflict>
</comment>
<comment type="sequence caution" evidence="14">
    <conflict type="erroneous initiation">
        <sequence resource="EMBL-CDS" id="BAC28778"/>
    </conflict>
    <text>Truncated N-terminus.</text>
</comment>
<proteinExistence type="evidence at protein level"/>
<accession>Q8BM75</accession>
<accession>E9Q523</accession>
<accession>Q8C0E0</accession>
<accession>Q8K4G8</accession>
<accession>Q8K4L9</accession>
<accession>Q9CU78</accession>
<accession>Q9JIX4</accession>
<feature type="chain" id="PRO_0000200582" description="AT-rich interactive domain-containing protein 5B">
    <location>
        <begin position="1"/>
        <end position="1188"/>
    </location>
</feature>
<feature type="domain" description="ARID" evidence="3">
    <location>
        <begin position="319"/>
        <end position="411"/>
    </location>
</feature>
<feature type="region of interest" description="Disordered" evidence="4">
    <location>
        <begin position="251"/>
        <end position="278"/>
    </location>
</feature>
<feature type="region of interest" description="Disordered" evidence="4">
    <location>
        <begin position="413"/>
        <end position="614"/>
    </location>
</feature>
<feature type="region of interest" description="Disordered" evidence="4">
    <location>
        <begin position="958"/>
        <end position="978"/>
    </location>
</feature>
<feature type="region of interest" description="Disordered" evidence="4">
    <location>
        <begin position="1030"/>
        <end position="1066"/>
    </location>
</feature>
<feature type="compositionally biased region" description="Polar residues" evidence="4">
    <location>
        <begin position="265"/>
        <end position="275"/>
    </location>
</feature>
<feature type="compositionally biased region" description="Basic and acidic residues" evidence="4">
    <location>
        <begin position="445"/>
        <end position="459"/>
    </location>
</feature>
<feature type="compositionally biased region" description="Basic and acidic residues" evidence="4">
    <location>
        <begin position="470"/>
        <end position="484"/>
    </location>
</feature>
<feature type="compositionally biased region" description="Basic and acidic residues" evidence="4">
    <location>
        <begin position="493"/>
        <end position="504"/>
    </location>
</feature>
<feature type="compositionally biased region" description="Basic and acidic residues" evidence="4">
    <location>
        <begin position="526"/>
        <end position="535"/>
    </location>
</feature>
<feature type="compositionally biased region" description="Polar residues" evidence="4">
    <location>
        <begin position="594"/>
        <end position="609"/>
    </location>
</feature>
<feature type="compositionally biased region" description="Basic and acidic residues" evidence="4">
    <location>
        <begin position="1036"/>
        <end position="1048"/>
    </location>
</feature>
<feature type="modified residue" description="Phosphoserine" evidence="2">
    <location>
        <position position="264"/>
    </location>
</feature>
<feature type="modified residue" description="N6,N6-dimethyllysine" evidence="2">
    <location>
        <position position="337"/>
    </location>
</feature>
<feature type="modified residue" description="Phosphoserine" evidence="2">
    <location>
        <position position="1032"/>
    </location>
</feature>
<feature type="modified residue" description="Phosphoserine" evidence="2">
    <location>
        <position position="1133"/>
    </location>
</feature>
<feature type="cross-link" description="Glycyl lysine isopeptide (Lys-Gly) (interchain with G-Cter in SUMO2)" evidence="2">
    <location>
        <position position="130"/>
    </location>
</feature>
<feature type="cross-link" description="Glycyl lysine isopeptide (Lys-Gly) (interchain with G-Cter in SUMO2)" evidence="2">
    <location>
        <position position="446"/>
    </location>
</feature>
<feature type="cross-link" description="Glycyl lysine isopeptide (Lys-Gly) (interchain with G-Cter in SUMO2)" evidence="2">
    <location>
        <position position="494"/>
    </location>
</feature>
<feature type="cross-link" description="Glycyl lysine isopeptide (Lys-Gly) (interchain with G-Cter in SUMO2)" evidence="2">
    <location>
        <position position="496"/>
    </location>
</feature>
<feature type="cross-link" description="Glycyl lysine isopeptide (Lys-Gly) (interchain with G-Cter in SUMO2)" evidence="2">
    <location>
        <position position="767"/>
    </location>
</feature>
<feature type="cross-link" description="Glycyl lysine isopeptide (Lys-Gly) (interchain with G-Cter in SUMO2)" evidence="2">
    <location>
        <position position="774"/>
    </location>
</feature>
<feature type="cross-link" description="Glycyl lysine isopeptide (Lys-Gly) (interchain with G-Cter in SUMO2)" evidence="2">
    <location>
        <position position="803"/>
    </location>
</feature>
<feature type="cross-link" description="Glycyl lysine isopeptide (Lys-Gly) (interchain with G-Cter in SUMO2)" evidence="2">
    <location>
        <position position="810"/>
    </location>
</feature>
<feature type="cross-link" description="Glycyl lysine isopeptide (Lys-Gly) (interchain with G-Cter in SUMO2)" evidence="2">
    <location>
        <position position="893"/>
    </location>
</feature>
<feature type="cross-link" description="Glycyl lysine isopeptide (Lys-Gly) (interchain with G-Cter in SUMO2)" evidence="2">
    <location>
        <position position="916"/>
    </location>
</feature>
<feature type="cross-link" description="Glycyl lysine isopeptide (Lys-Gly) (interchain with G-Cter in SUMO2)" evidence="2">
    <location>
        <position position="920"/>
    </location>
</feature>
<feature type="cross-link" description="Glycyl lysine isopeptide (Lys-Gly) (interchain with G-Cter in SUMO2)" evidence="2">
    <location>
        <position position="935"/>
    </location>
</feature>
<feature type="cross-link" description="Glycyl lysine isopeptide (Lys-Gly) (interchain with G-Cter in SUMO2)" evidence="2">
    <location>
        <position position="988"/>
    </location>
</feature>
<feature type="cross-link" description="Glycyl lysine isopeptide (Lys-Gly) (interchain with G-Cter in SUMO2)" evidence="2">
    <location>
        <position position="1000"/>
    </location>
</feature>
<feature type="cross-link" description="Glycyl lysine isopeptide (Lys-Gly) (interchain with G-Cter in SUMO2)" evidence="2">
    <location>
        <position position="1013"/>
    </location>
</feature>
<feature type="cross-link" description="Glycyl lysine isopeptide (Lys-Gly) (interchain with G-Cter in SUMO2)" evidence="2">
    <location>
        <position position="1055"/>
    </location>
</feature>
<feature type="cross-link" description="Glycyl lysine isopeptide (Lys-Gly) (interchain with G-Cter in SUMO2)" evidence="2">
    <location>
        <position position="1070"/>
    </location>
</feature>
<feature type="splice variant" id="VSP_009357" description="In isoform 2." evidence="12">
    <location>
        <begin position="1"/>
        <end position="243"/>
    </location>
</feature>
<feature type="splice variant" id="VSP_009358" description="In isoform 2." evidence="12">
    <original>F</original>
    <variation>M</variation>
    <location>
        <position position="244"/>
    </location>
</feature>
<feature type="splice variant" id="VSP_009359" description="In isoform 3." evidence="13">
    <original>APNLKGRPRKKKTCPQRRDSFSGSKDPNNNCD</original>
    <variation>GECFSFTLFETRPNESLFSIHGVSSAGEQGLV</variation>
    <location>
        <begin position="245"/>
        <end position="276"/>
    </location>
</feature>
<feature type="splice variant" id="VSP_009360" description="In isoform 3." evidence="13">
    <location>
        <begin position="277"/>
        <end position="1188"/>
    </location>
</feature>
<feature type="sequence conflict" description="In Ref. 3; AAF89682." evidence="14" ref="3">
    <original>K</original>
    <variation>T</variation>
    <location>
        <position position="111"/>
    </location>
</feature>
<feature type="sequence conflict" description="In Ref. 3; AAF89682." evidence="14" ref="3">
    <original>A</original>
    <variation>G</variation>
    <location>
        <position position="287"/>
    </location>
</feature>
<feature type="sequence conflict" description="In Ref. 1; AAM93282/AAM93269 and 3; AAF89682." evidence="14" ref="1 3">
    <original>K</original>
    <variation>E</variation>
    <location>
        <position position="474"/>
    </location>
</feature>
<feature type="sequence conflict" description="In Ref. 1; AAM93282/AAM93269 and 3; AAF89682." evidence="14" ref="1 3">
    <original>N</original>
    <variation>S</variation>
    <location>
        <position position="480"/>
    </location>
</feature>
<feature type="sequence conflict" description="In Ref. 1; AAM93282/AAM93269." evidence="14" ref="1">
    <original>T</original>
    <variation>A</variation>
    <location>
        <position position="928"/>
    </location>
</feature>
<feature type="sequence conflict" description="In Ref. 1; AAM93282/AAM93269." evidence="14" ref="1">
    <original>G</original>
    <variation>S</variation>
    <location>
        <position position="1056"/>
    </location>
</feature>
<gene>
    <name type="primary">Arid5b</name>
    <name type="synonym">Desrt</name>
    <name type="synonym">Mrf2</name>
</gene>
<evidence type="ECO:0000250" key="1"/>
<evidence type="ECO:0000250" key="2">
    <source>
        <dbReference type="UniProtKB" id="Q14865"/>
    </source>
</evidence>
<evidence type="ECO:0000255" key="3">
    <source>
        <dbReference type="PROSITE-ProRule" id="PRU00355"/>
    </source>
</evidence>
<evidence type="ECO:0000256" key="4">
    <source>
        <dbReference type="SAM" id="MobiDB-lite"/>
    </source>
</evidence>
<evidence type="ECO:0000269" key="5">
    <source>
    </source>
</evidence>
<evidence type="ECO:0000269" key="6">
    <source>
    </source>
</evidence>
<evidence type="ECO:0000269" key="7">
    <source>
    </source>
</evidence>
<evidence type="ECO:0000269" key="8">
    <source>
    </source>
</evidence>
<evidence type="ECO:0000269" key="9">
    <source>
    </source>
</evidence>
<evidence type="ECO:0000269" key="10">
    <source>
    </source>
</evidence>
<evidence type="ECO:0000269" key="11">
    <source>
    </source>
</evidence>
<evidence type="ECO:0000303" key="12">
    <source>
    </source>
</evidence>
<evidence type="ECO:0000303" key="13">
    <source>
    </source>
</evidence>
<evidence type="ECO:0000305" key="14"/>
<keyword id="KW-0010">Activator</keyword>
<keyword id="KW-0025">Alternative splicing</keyword>
<keyword id="KW-0903">Direct protein sequencing</keyword>
<keyword id="KW-0238">DNA-binding</keyword>
<keyword id="KW-1017">Isopeptide bond</keyword>
<keyword id="KW-0488">Methylation</keyword>
<keyword id="KW-0539">Nucleus</keyword>
<keyword id="KW-0597">Phosphoprotein</keyword>
<keyword id="KW-1185">Reference proteome</keyword>
<keyword id="KW-0804">Transcription</keyword>
<keyword id="KW-0805">Transcription regulation</keyword>
<keyword id="KW-0832">Ubl conjugation</keyword>